<proteinExistence type="inferred from homology"/>
<organism>
    <name type="scientific">Bartonella tribocorum (strain CIP 105476 / IBS 506)</name>
    <dbReference type="NCBI Taxonomy" id="382640"/>
    <lineage>
        <taxon>Bacteria</taxon>
        <taxon>Pseudomonadati</taxon>
        <taxon>Pseudomonadota</taxon>
        <taxon>Alphaproteobacteria</taxon>
        <taxon>Hyphomicrobiales</taxon>
        <taxon>Bartonellaceae</taxon>
        <taxon>Bartonella</taxon>
    </lineage>
</organism>
<protein>
    <recommendedName>
        <fullName evidence="1">CTP synthase</fullName>
        <ecNumber evidence="1">6.3.4.2</ecNumber>
    </recommendedName>
    <alternativeName>
        <fullName evidence="1">Cytidine 5'-triphosphate synthase</fullName>
    </alternativeName>
    <alternativeName>
        <fullName evidence="1">Cytidine triphosphate synthetase</fullName>
        <shortName evidence="1">CTP synthetase</shortName>
        <shortName evidence="1">CTPS</shortName>
    </alternativeName>
    <alternativeName>
        <fullName evidence="1">UTP--ammonia ligase</fullName>
    </alternativeName>
</protein>
<gene>
    <name evidence="1" type="primary">pyrG</name>
    <name type="ordered locus">BT_0854</name>
</gene>
<dbReference type="EC" id="6.3.4.2" evidence="1"/>
<dbReference type="EMBL" id="AM260525">
    <property type="protein sequence ID" value="CAK01260.1"/>
    <property type="molecule type" value="Genomic_DNA"/>
</dbReference>
<dbReference type="RefSeq" id="WP_012231402.1">
    <property type="nucleotide sequence ID" value="NC_010161.1"/>
</dbReference>
<dbReference type="SMR" id="A9IS43"/>
<dbReference type="KEGG" id="btr:BT_0854"/>
<dbReference type="eggNOG" id="COG0504">
    <property type="taxonomic scope" value="Bacteria"/>
</dbReference>
<dbReference type="HOGENOM" id="CLU_011675_5_0_5"/>
<dbReference type="UniPathway" id="UPA00159">
    <property type="reaction ID" value="UER00277"/>
</dbReference>
<dbReference type="Proteomes" id="UP000001592">
    <property type="component" value="Chromosome"/>
</dbReference>
<dbReference type="GO" id="GO:0005829">
    <property type="term" value="C:cytosol"/>
    <property type="evidence" value="ECO:0007669"/>
    <property type="project" value="TreeGrafter"/>
</dbReference>
<dbReference type="GO" id="GO:0005524">
    <property type="term" value="F:ATP binding"/>
    <property type="evidence" value="ECO:0007669"/>
    <property type="project" value="UniProtKB-KW"/>
</dbReference>
<dbReference type="GO" id="GO:0003883">
    <property type="term" value="F:CTP synthase activity"/>
    <property type="evidence" value="ECO:0007669"/>
    <property type="project" value="UniProtKB-UniRule"/>
</dbReference>
<dbReference type="GO" id="GO:0004359">
    <property type="term" value="F:glutaminase activity"/>
    <property type="evidence" value="ECO:0007669"/>
    <property type="project" value="RHEA"/>
</dbReference>
<dbReference type="GO" id="GO:0042802">
    <property type="term" value="F:identical protein binding"/>
    <property type="evidence" value="ECO:0007669"/>
    <property type="project" value="TreeGrafter"/>
</dbReference>
<dbReference type="GO" id="GO:0046872">
    <property type="term" value="F:metal ion binding"/>
    <property type="evidence" value="ECO:0007669"/>
    <property type="project" value="UniProtKB-KW"/>
</dbReference>
<dbReference type="GO" id="GO:0044210">
    <property type="term" value="P:'de novo' CTP biosynthetic process"/>
    <property type="evidence" value="ECO:0007669"/>
    <property type="project" value="UniProtKB-UniRule"/>
</dbReference>
<dbReference type="GO" id="GO:0019856">
    <property type="term" value="P:pyrimidine nucleobase biosynthetic process"/>
    <property type="evidence" value="ECO:0007669"/>
    <property type="project" value="TreeGrafter"/>
</dbReference>
<dbReference type="CDD" id="cd03113">
    <property type="entry name" value="CTPS_N"/>
    <property type="match status" value="1"/>
</dbReference>
<dbReference type="CDD" id="cd01746">
    <property type="entry name" value="GATase1_CTP_Synthase"/>
    <property type="match status" value="1"/>
</dbReference>
<dbReference type="FunFam" id="3.40.50.300:FF:000009">
    <property type="entry name" value="CTP synthase"/>
    <property type="match status" value="1"/>
</dbReference>
<dbReference type="FunFam" id="3.40.50.880:FF:000002">
    <property type="entry name" value="CTP synthase"/>
    <property type="match status" value="1"/>
</dbReference>
<dbReference type="Gene3D" id="3.40.50.880">
    <property type="match status" value="1"/>
</dbReference>
<dbReference type="Gene3D" id="3.40.50.300">
    <property type="entry name" value="P-loop containing nucleotide triphosphate hydrolases"/>
    <property type="match status" value="1"/>
</dbReference>
<dbReference type="HAMAP" id="MF_01227">
    <property type="entry name" value="PyrG"/>
    <property type="match status" value="1"/>
</dbReference>
<dbReference type="InterPro" id="IPR029062">
    <property type="entry name" value="Class_I_gatase-like"/>
</dbReference>
<dbReference type="InterPro" id="IPR004468">
    <property type="entry name" value="CTP_synthase"/>
</dbReference>
<dbReference type="InterPro" id="IPR017456">
    <property type="entry name" value="CTP_synthase_N"/>
</dbReference>
<dbReference type="InterPro" id="IPR017926">
    <property type="entry name" value="GATASE"/>
</dbReference>
<dbReference type="InterPro" id="IPR033828">
    <property type="entry name" value="GATase1_CTP_Synthase"/>
</dbReference>
<dbReference type="InterPro" id="IPR027417">
    <property type="entry name" value="P-loop_NTPase"/>
</dbReference>
<dbReference type="NCBIfam" id="NF003792">
    <property type="entry name" value="PRK05380.1"/>
    <property type="match status" value="1"/>
</dbReference>
<dbReference type="NCBIfam" id="TIGR00337">
    <property type="entry name" value="PyrG"/>
    <property type="match status" value="1"/>
</dbReference>
<dbReference type="PANTHER" id="PTHR11550">
    <property type="entry name" value="CTP SYNTHASE"/>
    <property type="match status" value="1"/>
</dbReference>
<dbReference type="PANTHER" id="PTHR11550:SF0">
    <property type="entry name" value="CTP SYNTHASE-RELATED"/>
    <property type="match status" value="1"/>
</dbReference>
<dbReference type="Pfam" id="PF06418">
    <property type="entry name" value="CTP_synth_N"/>
    <property type="match status" value="1"/>
</dbReference>
<dbReference type="Pfam" id="PF00117">
    <property type="entry name" value="GATase"/>
    <property type="match status" value="1"/>
</dbReference>
<dbReference type="SUPFAM" id="SSF52317">
    <property type="entry name" value="Class I glutamine amidotransferase-like"/>
    <property type="match status" value="1"/>
</dbReference>
<dbReference type="SUPFAM" id="SSF52540">
    <property type="entry name" value="P-loop containing nucleoside triphosphate hydrolases"/>
    <property type="match status" value="1"/>
</dbReference>
<dbReference type="PROSITE" id="PS51273">
    <property type="entry name" value="GATASE_TYPE_1"/>
    <property type="match status" value="1"/>
</dbReference>
<comment type="function">
    <text evidence="1">Catalyzes the ATP-dependent amination of UTP to CTP with either L-glutamine or ammonia as the source of nitrogen. Regulates intracellular CTP levels through interactions with the four ribonucleotide triphosphates.</text>
</comment>
<comment type="catalytic activity">
    <reaction evidence="1">
        <text>UTP + L-glutamine + ATP + H2O = CTP + L-glutamate + ADP + phosphate + 2 H(+)</text>
        <dbReference type="Rhea" id="RHEA:26426"/>
        <dbReference type="ChEBI" id="CHEBI:15377"/>
        <dbReference type="ChEBI" id="CHEBI:15378"/>
        <dbReference type="ChEBI" id="CHEBI:29985"/>
        <dbReference type="ChEBI" id="CHEBI:30616"/>
        <dbReference type="ChEBI" id="CHEBI:37563"/>
        <dbReference type="ChEBI" id="CHEBI:43474"/>
        <dbReference type="ChEBI" id="CHEBI:46398"/>
        <dbReference type="ChEBI" id="CHEBI:58359"/>
        <dbReference type="ChEBI" id="CHEBI:456216"/>
        <dbReference type="EC" id="6.3.4.2"/>
    </reaction>
</comment>
<comment type="catalytic activity">
    <reaction evidence="1">
        <text>L-glutamine + H2O = L-glutamate + NH4(+)</text>
        <dbReference type="Rhea" id="RHEA:15889"/>
        <dbReference type="ChEBI" id="CHEBI:15377"/>
        <dbReference type="ChEBI" id="CHEBI:28938"/>
        <dbReference type="ChEBI" id="CHEBI:29985"/>
        <dbReference type="ChEBI" id="CHEBI:58359"/>
    </reaction>
</comment>
<comment type="catalytic activity">
    <reaction evidence="1">
        <text>UTP + NH4(+) + ATP = CTP + ADP + phosphate + 2 H(+)</text>
        <dbReference type="Rhea" id="RHEA:16597"/>
        <dbReference type="ChEBI" id="CHEBI:15378"/>
        <dbReference type="ChEBI" id="CHEBI:28938"/>
        <dbReference type="ChEBI" id="CHEBI:30616"/>
        <dbReference type="ChEBI" id="CHEBI:37563"/>
        <dbReference type="ChEBI" id="CHEBI:43474"/>
        <dbReference type="ChEBI" id="CHEBI:46398"/>
        <dbReference type="ChEBI" id="CHEBI:456216"/>
    </reaction>
</comment>
<comment type="activity regulation">
    <text evidence="1">Allosterically activated by GTP, when glutamine is the substrate; GTP has no effect on the reaction when ammonia is the substrate. The allosteric effector GTP functions by stabilizing the protein conformation that binds the tetrahedral intermediate(s) formed during glutamine hydrolysis. Inhibited by the product CTP, via allosteric rather than competitive inhibition.</text>
</comment>
<comment type="pathway">
    <text evidence="1">Pyrimidine metabolism; CTP biosynthesis via de novo pathway; CTP from UDP: step 2/2.</text>
</comment>
<comment type="subunit">
    <text evidence="1">Homotetramer.</text>
</comment>
<comment type="miscellaneous">
    <text evidence="1">CTPSs have evolved a hybrid strategy for distinguishing between UTP and CTP. The overlapping regions of the product feedback inhibitory and substrate sites recognize a common feature in both compounds, the triphosphate moiety. To differentiate isosteric substrate and product pyrimidine rings, an additional pocket far from the expected kinase/ligase catalytic site, specifically recognizes the cytosine and ribose portions of the product inhibitor.</text>
</comment>
<comment type="similarity">
    <text evidence="1">Belongs to the CTP synthase family.</text>
</comment>
<name>PYRG_BART1</name>
<reference key="1">
    <citation type="journal article" date="2007" name="Nat. Genet.">
        <title>Genomic analysis of Bartonella identifies type IV secretion systems as host adaptability factors.</title>
        <authorList>
            <person name="Saenz H.L."/>
            <person name="Engel P."/>
            <person name="Stoeckli M.C."/>
            <person name="Lanz C."/>
            <person name="Raddatz G."/>
            <person name="Vayssier-Taussat M."/>
            <person name="Birtles R."/>
            <person name="Schuster S.C."/>
            <person name="Dehio C."/>
        </authorList>
    </citation>
    <scope>NUCLEOTIDE SEQUENCE [LARGE SCALE GENOMIC DNA]</scope>
    <source>
        <strain>CIP 105476 / IBS 506</strain>
    </source>
</reference>
<accession>A9IS43</accession>
<evidence type="ECO:0000255" key="1">
    <source>
        <dbReference type="HAMAP-Rule" id="MF_01227"/>
    </source>
</evidence>
<sequence length="542" mass="60308">MARYVFITGGVVSSLGKGIAAAALAALLQARGYRVRLRKLDPYLNVDPGTMSPYQHGEVFVTDDGAETDLDLGHYERFTGRSANSQDNITTGRIYRNIIERERRGDYLGATVQVIPHVTDEIKRFITTGNEEFDFVLCEIGGTVGDIEAMPFLEAIRQLGNELSRQNVIYIHLTLMPFIPSAGELKTKPTQHSVKELQSVGISPDILLVRADRSIPETERCKLSLFCNVRANAVIQALDMPTIYDVPMAYHKEGLDSEVLCAFGIDSAPPPQMDLWEDITHRIHHPEGEVTIAVVGKYTGLKDAYKSLIEAIAHGGLANKVKVNIEWIDSQLFEKENSVLALQKAHGILVPGAFGARGAEGKIRAIQFARERKIPFLGICFGMQLACIEAARNIAQIENASSSEFCETENPIVGLMTEWLKGDVLEKRTRNGDLGGSMRLGAFAAELKEESHIAKIYGMTKIVERHRHRYEVNIDYKDKLEQCGLIFSGMSPDGVLPETIEYVDHPWFIGVQYHPELKSRPFDPHPLFSSFIEAAVEQSRLV</sequence>
<keyword id="KW-0067">ATP-binding</keyword>
<keyword id="KW-0315">Glutamine amidotransferase</keyword>
<keyword id="KW-0436">Ligase</keyword>
<keyword id="KW-0460">Magnesium</keyword>
<keyword id="KW-0479">Metal-binding</keyword>
<keyword id="KW-0547">Nucleotide-binding</keyword>
<keyword id="KW-0665">Pyrimidine biosynthesis</keyword>
<feature type="chain" id="PRO_1000164929" description="CTP synthase">
    <location>
        <begin position="1"/>
        <end position="542"/>
    </location>
</feature>
<feature type="domain" description="Glutamine amidotransferase type-1" evidence="1">
    <location>
        <begin position="291"/>
        <end position="541"/>
    </location>
</feature>
<feature type="region of interest" description="Amidoligase domain" evidence="1">
    <location>
        <begin position="1"/>
        <end position="265"/>
    </location>
</feature>
<feature type="active site" description="Nucleophile; for glutamine hydrolysis" evidence="1">
    <location>
        <position position="380"/>
    </location>
</feature>
<feature type="active site" evidence="1">
    <location>
        <position position="514"/>
    </location>
</feature>
<feature type="active site" evidence="1">
    <location>
        <position position="516"/>
    </location>
</feature>
<feature type="binding site" evidence="1">
    <location>
        <position position="13"/>
    </location>
    <ligand>
        <name>CTP</name>
        <dbReference type="ChEBI" id="CHEBI:37563"/>
        <note>allosteric inhibitor</note>
    </ligand>
</feature>
<feature type="binding site" evidence="1">
    <location>
        <position position="13"/>
    </location>
    <ligand>
        <name>UTP</name>
        <dbReference type="ChEBI" id="CHEBI:46398"/>
    </ligand>
</feature>
<feature type="binding site" evidence="1">
    <location>
        <begin position="14"/>
        <end position="19"/>
    </location>
    <ligand>
        <name>ATP</name>
        <dbReference type="ChEBI" id="CHEBI:30616"/>
    </ligand>
</feature>
<feature type="binding site" evidence="1">
    <location>
        <position position="54"/>
    </location>
    <ligand>
        <name>L-glutamine</name>
        <dbReference type="ChEBI" id="CHEBI:58359"/>
    </ligand>
</feature>
<feature type="binding site" evidence="1">
    <location>
        <position position="71"/>
    </location>
    <ligand>
        <name>ATP</name>
        <dbReference type="ChEBI" id="CHEBI:30616"/>
    </ligand>
</feature>
<feature type="binding site" evidence="1">
    <location>
        <position position="71"/>
    </location>
    <ligand>
        <name>Mg(2+)</name>
        <dbReference type="ChEBI" id="CHEBI:18420"/>
    </ligand>
</feature>
<feature type="binding site" evidence="1">
    <location>
        <position position="139"/>
    </location>
    <ligand>
        <name>Mg(2+)</name>
        <dbReference type="ChEBI" id="CHEBI:18420"/>
    </ligand>
</feature>
<feature type="binding site" evidence="1">
    <location>
        <begin position="146"/>
        <end position="148"/>
    </location>
    <ligand>
        <name>CTP</name>
        <dbReference type="ChEBI" id="CHEBI:37563"/>
        <note>allosteric inhibitor</note>
    </ligand>
</feature>
<feature type="binding site" evidence="1">
    <location>
        <begin position="186"/>
        <end position="191"/>
    </location>
    <ligand>
        <name>CTP</name>
        <dbReference type="ChEBI" id="CHEBI:37563"/>
        <note>allosteric inhibitor</note>
    </ligand>
</feature>
<feature type="binding site" evidence="1">
    <location>
        <begin position="186"/>
        <end position="191"/>
    </location>
    <ligand>
        <name>UTP</name>
        <dbReference type="ChEBI" id="CHEBI:46398"/>
    </ligand>
</feature>
<feature type="binding site" evidence="1">
    <location>
        <position position="222"/>
    </location>
    <ligand>
        <name>CTP</name>
        <dbReference type="ChEBI" id="CHEBI:37563"/>
        <note>allosteric inhibitor</note>
    </ligand>
</feature>
<feature type="binding site" evidence="1">
    <location>
        <position position="222"/>
    </location>
    <ligand>
        <name>UTP</name>
        <dbReference type="ChEBI" id="CHEBI:46398"/>
    </ligand>
</feature>
<feature type="binding site" evidence="1">
    <location>
        <position position="353"/>
    </location>
    <ligand>
        <name>L-glutamine</name>
        <dbReference type="ChEBI" id="CHEBI:58359"/>
    </ligand>
</feature>
<feature type="binding site" evidence="1">
    <location>
        <begin position="381"/>
        <end position="384"/>
    </location>
    <ligand>
        <name>L-glutamine</name>
        <dbReference type="ChEBI" id="CHEBI:58359"/>
    </ligand>
</feature>
<feature type="binding site" evidence="1">
    <location>
        <position position="404"/>
    </location>
    <ligand>
        <name>L-glutamine</name>
        <dbReference type="ChEBI" id="CHEBI:58359"/>
    </ligand>
</feature>
<feature type="binding site" evidence="1">
    <location>
        <position position="469"/>
    </location>
    <ligand>
        <name>L-glutamine</name>
        <dbReference type="ChEBI" id="CHEBI:58359"/>
    </ligand>
</feature>